<reference key="1">
    <citation type="journal article" date="2003" name="Proc. Natl. Acad. Sci. U.S.A.">
        <title>The complete genome sequence of the Arabidopsis and tomato pathogen Pseudomonas syringae pv. tomato DC3000.</title>
        <authorList>
            <person name="Buell C.R."/>
            <person name="Joardar V."/>
            <person name="Lindeberg M."/>
            <person name="Selengut J."/>
            <person name="Paulsen I.T."/>
            <person name="Gwinn M.L."/>
            <person name="Dodson R.J."/>
            <person name="DeBoy R.T."/>
            <person name="Durkin A.S."/>
            <person name="Kolonay J.F."/>
            <person name="Madupu R."/>
            <person name="Daugherty S.C."/>
            <person name="Brinkac L.M."/>
            <person name="Beanan M.J."/>
            <person name="Haft D.H."/>
            <person name="Nelson W.C."/>
            <person name="Davidsen T.M."/>
            <person name="Zafar N."/>
            <person name="Zhou L."/>
            <person name="Liu J."/>
            <person name="Yuan Q."/>
            <person name="Khouri H.M."/>
            <person name="Fedorova N.B."/>
            <person name="Tran B."/>
            <person name="Russell D."/>
            <person name="Berry K.J."/>
            <person name="Utterback T.R."/>
            <person name="Van Aken S.E."/>
            <person name="Feldblyum T.V."/>
            <person name="D'Ascenzo M."/>
            <person name="Deng W.-L."/>
            <person name="Ramos A.R."/>
            <person name="Alfano J.R."/>
            <person name="Cartinhour S."/>
            <person name="Chatterjee A.K."/>
            <person name="Delaney T.P."/>
            <person name="Lazarowitz S.G."/>
            <person name="Martin G.B."/>
            <person name="Schneider D.J."/>
            <person name="Tang X."/>
            <person name="Bender C.L."/>
            <person name="White O."/>
            <person name="Fraser C.M."/>
            <person name="Collmer A."/>
        </authorList>
    </citation>
    <scope>NUCLEOTIDE SEQUENCE [LARGE SCALE GENOMIC DNA]</scope>
    <source>
        <strain>ATCC BAA-871 / DC3000</strain>
    </source>
</reference>
<keyword id="KW-0004">4Fe-4S</keyword>
<keyword id="KW-0408">Iron</keyword>
<keyword id="KW-0411">Iron-sulfur</keyword>
<keyword id="KW-0414">Isoprene biosynthesis</keyword>
<keyword id="KW-0479">Metal-binding</keyword>
<keyword id="KW-0560">Oxidoreductase</keyword>
<keyword id="KW-1185">Reference proteome</keyword>
<feature type="chain" id="PRO_0000128860" description="4-hydroxy-3-methylbut-2-enyl diphosphate reductase">
    <location>
        <begin position="1"/>
        <end position="315"/>
    </location>
</feature>
<feature type="active site" description="Proton donor" evidence="1">
    <location>
        <position position="126"/>
    </location>
</feature>
<feature type="binding site" evidence="1">
    <location>
        <position position="12"/>
    </location>
    <ligand>
        <name>[4Fe-4S] cluster</name>
        <dbReference type="ChEBI" id="CHEBI:49883"/>
    </ligand>
</feature>
<feature type="binding site" evidence="1">
    <location>
        <position position="41"/>
    </location>
    <ligand>
        <name>(2E)-4-hydroxy-3-methylbut-2-enyl diphosphate</name>
        <dbReference type="ChEBI" id="CHEBI:128753"/>
    </ligand>
</feature>
<feature type="binding site" evidence="1">
    <location>
        <position position="41"/>
    </location>
    <ligand>
        <name>dimethylallyl diphosphate</name>
        <dbReference type="ChEBI" id="CHEBI:57623"/>
    </ligand>
</feature>
<feature type="binding site" evidence="1">
    <location>
        <position position="41"/>
    </location>
    <ligand>
        <name>isopentenyl diphosphate</name>
        <dbReference type="ChEBI" id="CHEBI:128769"/>
    </ligand>
</feature>
<feature type="binding site" evidence="1">
    <location>
        <position position="74"/>
    </location>
    <ligand>
        <name>(2E)-4-hydroxy-3-methylbut-2-enyl diphosphate</name>
        <dbReference type="ChEBI" id="CHEBI:128753"/>
    </ligand>
</feature>
<feature type="binding site" evidence="1">
    <location>
        <position position="74"/>
    </location>
    <ligand>
        <name>dimethylallyl diphosphate</name>
        <dbReference type="ChEBI" id="CHEBI:57623"/>
    </ligand>
</feature>
<feature type="binding site" evidence="1">
    <location>
        <position position="74"/>
    </location>
    <ligand>
        <name>isopentenyl diphosphate</name>
        <dbReference type="ChEBI" id="CHEBI:128769"/>
    </ligand>
</feature>
<feature type="binding site" evidence="1">
    <location>
        <position position="96"/>
    </location>
    <ligand>
        <name>[4Fe-4S] cluster</name>
        <dbReference type="ChEBI" id="CHEBI:49883"/>
    </ligand>
</feature>
<feature type="binding site" evidence="1">
    <location>
        <position position="124"/>
    </location>
    <ligand>
        <name>(2E)-4-hydroxy-3-methylbut-2-enyl diphosphate</name>
        <dbReference type="ChEBI" id="CHEBI:128753"/>
    </ligand>
</feature>
<feature type="binding site" evidence="1">
    <location>
        <position position="124"/>
    </location>
    <ligand>
        <name>dimethylallyl diphosphate</name>
        <dbReference type="ChEBI" id="CHEBI:57623"/>
    </ligand>
</feature>
<feature type="binding site" evidence="1">
    <location>
        <position position="124"/>
    </location>
    <ligand>
        <name>isopentenyl diphosphate</name>
        <dbReference type="ChEBI" id="CHEBI:128769"/>
    </ligand>
</feature>
<feature type="binding site" evidence="1">
    <location>
        <position position="168"/>
    </location>
    <ligand>
        <name>(2E)-4-hydroxy-3-methylbut-2-enyl diphosphate</name>
        <dbReference type="ChEBI" id="CHEBI:128753"/>
    </ligand>
</feature>
<feature type="binding site" evidence="1">
    <location>
        <position position="198"/>
    </location>
    <ligand>
        <name>[4Fe-4S] cluster</name>
        <dbReference type="ChEBI" id="CHEBI:49883"/>
    </ligand>
</feature>
<feature type="binding site" evidence="1">
    <location>
        <position position="226"/>
    </location>
    <ligand>
        <name>(2E)-4-hydroxy-3-methylbut-2-enyl diphosphate</name>
        <dbReference type="ChEBI" id="CHEBI:128753"/>
    </ligand>
</feature>
<feature type="binding site" evidence="1">
    <location>
        <position position="226"/>
    </location>
    <ligand>
        <name>dimethylallyl diphosphate</name>
        <dbReference type="ChEBI" id="CHEBI:57623"/>
    </ligand>
</feature>
<feature type="binding site" evidence="1">
    <location>
        <position position="226"/>
    </location>
    <ligand>
        <name>isopentenyl diphosphate</name>
        <dbReference type="ChEBI" id="CHEBI:128769"/>
    </ligand>
</feature>
<feature type="binding site" evidence="1">
    <location>
        <position position="227"/>
    </location>
    <ligand>
        <name>(2E)-4-hydroxy-3-methylbut-2-enyl diphosphate</name>
        <dbReference type="ChEBI" id="CHEBI:128753"/>
    </ligand>
</feature>
<feature type="binding site" evidence="1">
    <location>
        <position position="227"/>
    </location>
    <ligand>
        <name>dimethylallyl diphosphate</name>
        <dbReference type="ChEBI" id="CHEBI:57623"/>
    </ligand>
</feature>
<feature type="binding site" evidence="1">
    <location>
        <position position="227"/>
    </location>
    <ligand>
        <name>isopentenyl diphosphate</name>
        <dbReference type="ChEBI" id="CHEBI:128769"/>
    </ligand>
</feature>
<feature type="binding site" evidence="1">
    <location>
        <position position="228"/>
    </location>
    <ligand>
        <name>(2E)-4-hydroxy-3-methylbut-2-enyl diphosphate</name>
        <dbReference type="ChEBI" id="CHEBI:128753"/>
    </ligand>
</feature>
<feature type="binding site" evidence="1">
    <location>
        <position position="228"/>
    </location>
    <ligand>
        <name>dimethylallyl diphosphate</name>
        <dbReference type="ChEBI" id="CHEBI:57623"/>
    </ligand>
</feature>
<feature type="binding site" evidence="1">
    <location>
        <position position="228"/>
    </location>
    <ligand>
        <name>isopentenyl diphosphate</name>
        <dbReference type="ChEBI" id="CHEBI:128769"/>
    </ligand>
</feature>
<feature type="binding site" evidence="1">
    <location>
        <position position="270"/>
    </location>
    <ligand>
        <name>(2E)-4-hydroxy-3-methylbut-2-enyl diphosphate</name>
        <dbReference type="ChEBI" id="CHEBI:128753"/>
    </ligand>
</feature>
<feature type="binding site" evidence="1">
    <location>
        <position position="270"/>
    </location>
    <ligand>
        <name>dimethylallyl diphosphate</name>
        <dbReference type="ChEBI" id="CHEBI:57623"/>
    </ligand>
</feature>
<feature type="binding site" evidence="1">
    <location>
        <position position="270"/>
    </location>
    <ligand>
        <name>isopentenyl diphosphate</name>
        <dbReference type="ChEBI" id="CHEBI:128769"/>
    </ligand>
</feature>
<sequence>MQIKLANPRGFCAGVDRAIEIVNRALEVFGPPIYVRHEVVHNKFVVEDLRSRGAIFVEELEQVPDDVIVIFSAHGVSQAVRTEAAGRGLKVFDATCPLVTKVHIEVARYSRDGRECILIGHAGHPEVEGTMGQYDAVNGGAIYLVEDEADVASLEVRNPESLAFVTQTTLSMDDTSRVIDALRKRFPAIGGPRKDDICYATQNRQDAVKQLADECDVVLVVGSPNSSNSNRLRELAERMATPAYLIDGAEDMQKGWFDGVERIGITAGASAPEVLVRGVIQQLQAWGATGADELAGREENITFSMPKELRVKSLL</sequence>
<protein>
    <recommendedName>
        <fullName evidence="1">4-hydroxy-3-methylbut-2-enyl diphosphate reductase</fullName>
        <shortName evidence="1">HMBPP reductase</shortName>
        <ecNumber evidence="1">1.17.7.4</ecNumber>
    </recommendedName>
</protein>
<gene>
    <name evidence="1" type="primary">ispH</name>
    <name type="ordered locus">PSPTO_0809</name>
</gene>
<name>ISPH_PSESM</name>
<comment type="function">
    <text evidence="1">Catalyzes the conversion of 1-hydroxy-2-methyl-2-(E)-butenyl 4-diphosphate (HMBPP) into a mixture of isopentenyl diphosphate (IPP) and dimethylallyl diphosphate (DMAPP). Acts in the terminal step of the DOXP/MEP pathway for isoprenoid precursor biosynthesis.</text>
</comment>
<comment type="catalytic activity">
    <reaction evidence="1">
        <text>isopentenyl diphosphate + 2 oxidized [2Fe-2S]-[ferredoxin] + H2O = (2E)-4-hydroxy-3-methylbut-2-enyl diphosphate + 2 reduced [2Fe-2S]-[ferredoxin] + 2 H(+)</text>
        <dbReference type="Rhea" id="RHEA:24488"/>
        <dbReference type="Rhea" id="RHEA-COMP:10000"/>
        <dbReference type="Rhea" id="RHEA-COMP:10001"/>
        <dbReference type="ChEBI" id="CHEBI:15377"/>
        <dbReference type="ChEBI" id="CHEBI:15378"/>
        <dbReference type="ChEBI" id="CHEBI:33737"/>
        <dbReference type="ChEBI" id="CHEBI:33738"/>
        <dbReference type="ChEBI" id="CHEBI:128753"/>
        <dbReference type="ChEBI" id="CHEBI:128769"/>
        <dbReference type="EC" id="1.17.7.4"/>
    </reaction>
</comment>
<comment type="catalytic activity">
    <reaction evidence="1">
        <text>dimethylallyl diphosphate + 2 oxidized [2Fe-2S]-[ferredoxin] + H2O = (2E)-4-hydroxy-3-methylbut-2-enyl diphosphate + 2 reduced [2Fe-2S]-[ferredoxin] + 2 H(+)</text>
        <dbReference type="Rhea" id="RHEA:24825"/>
        <dbReference type="Rhea" id="RHEA-COMP:10000"/>
        <dbReference type="Rhea" id="RHEA-COMP:10001"/>
        <dbReference type="ChEBI" id="CHEBI:15377"/>
        <dbReference type="ChEBI" id="CHEBI:15378"/>
        <dbReference type="ChEBI" id="CHEBI:33737"/>
        <dbReference type="ChEBI" id="CHEBI:33738"/>
        <dbReference type="ChEBI" id="CHEBI:57623"/>
        <dbReference type="ChEBI" id="CHEBI:128753"/>
        <dbReference type="EC" id="1.17.7.4"/>
    </reaction>
</comment>
<comment type="cofactor">
    <cofactor evidence="1">
        <name>[4Fe-4S] cluster</name>
        <dbReference type="ChEBI" id="CHEBI:49883"/>
    </cofactor>
    <text evidence="1">Binds 1 [4Fe-4S] cluster per subunit.</text>
</comment>
<comment type="pathway">
    <text evidence="1">Isoprenoid biosynthesis; dimethylallyl diphosphate biosynthesis; dimethylallyl diphosphate from (2E)-4-hydroxy-3-methylbutenyl diphosphate: step 1/1.</text>
</comment>
<comment type="pathway">
    <text evidence="1">Isoprenoid biosynthesis; isopentenyl diphosphate biosynthesis via DXP pathway; isopentenyl diphosphate from 1-deoxy-D-xylulose 5-phosphate: step 6/6.</text>
</comment>
<comment type="similarity">
    <text evidence="1">Belongs to the IspH family.</text>
</comment>
<proteinExistence type="inferred from homology"/>
<organism>
    <name type="scientific">Pseudomonas syringae pv. tomato (strain ATCC BAA-871 / DC3000)</name>
    <dbReference type="NCBI Taxonomy" id="223283"/>
    <lineage>
        <taxon>Bacteria</taxon>
        <taxon>Pseudomonadati</taxon>
        <taxon>Pseudomonadota</taxon>
        <taxon>Gammaproteobacteria</taxon>
        <taxon>Pseudomonadales</taxon>
        <taxon>Pseudomonadaceae</taxon>
        <taxon>Pseudomonas</taxon>
    </lineage>
</organism>
<accession>Q889E1</accession>
<dbReference type="EC" id="1.17.7.4" evidence="1"/>
<dbReference type="EMBL" id="AE016853">
    <property type="protein sequence ID" value="AAO54351.1"/>
    <property type="molecule type" value="Genomic_DNA"/>
</dbReference>
<dbReference type="RefSeq" id="NP_790656.1">
    <property type="nucleotide sequence ID" value="NC_004578.1"/>
</dbReference>
<dbReference type="RefSeq" id="WP_005769262.1">
    <property type="nucleotide sequence ID" value="NC_004578.1"/>
</dbReference>
<dbReference type="SMR" id="Q889E1"/>
<dbReference type="STRING" id="223283.PSPTO_0809"/>
<dbReference type="GeneID" id="1182434"/>
<dbReference type="KEGG" id="pst:PSPTO_0809"/>
<dbReference type="PATRIC" id="fig|223283.9.peg.822"/>
<dbReference type="eggNOG" id="COG0761">
    <property type="taxonomic scope" value="Bacteria"/>
</dbReference>
<dbReference type="HOGENOM" id="CLU_027486_1_1_6"/>
<dbReference type="OrthoDB" id="9804068at2"/>
<dbReference type="PhylomeDB" id="Q889E1"/>
<dbReference type="UniPathway" id="UPA00056">
    <property type="reaction ID" value="UER00097"/>
</dbReference>
<dbReference type="UniPathway" id="UPA00059">
    <property type="reaction ID" value="UER00105"/>
</dbReference>
<dbReference type="Proteomes" id="UP000002515">
    <property type="component" value="Chromosome"/>
</dbReference>
<dbReference type="GO" id="GO:0051539">
    <property type="term" value="F:4 iron, 4 sulfur cluster binding"/>
    <property type="evidence" value="ECO:0007669"/>
    <property type="project" value="UniProtKB-UniRule"/>
</dbReference>
<dbReference type="GO" id="GO:0051745">
    <property type="term" value="F:4-hydroxy-3-methylbut-2-enyl diphosphate reductase activity"/>
    <property type="evidence" value="ECO:0007669"/>
    <property type="project" value="UniProtKB-UniRule"/>
</dbReference>
<dbReference type="GO" id="GO:0046872">
    <property type="term" value="F:metal ion binding"/>
    <property type="evidence" value="ECO:0007669"/>
    <property type="project" value="UniProtKB-KW"/>
</dbReference>
<dbReference type="GO" id="GO:0050992">
    <property type="term" value="P:dimethylallyl diphosphate biosynthetic process"/>
    <property type="evidence" value="ECO:0007669"/>
    <property type="project" value="UniProtKB-UniRule"/>
</dbReference>
<dbReference type="GO" id="GO:0019288">
    <property type="term" value="P:isopentenyl diphosphate biosynthetic process, methylerythritol 4-phosphate pathway"/>
    <property type="evidence" value="ECO:0007669"/>
    <property type="project" value="UniProtKB-UniRule"/>
</dbReference>
<dbReference type="GO" id="GO:0016114">
    <property type="term" value="P:terpenoid biosynthetic process"/>
    <property type="evidence" value="ECO:0007669"/>
    <property type="project" value="UniProtKB-UniRule"/>
</dbReference>
<dbReference type="CDD" id="cd13944">
    <property type="entry name" value="lytB_ispH"/>
    <property type="match status" value="1"/>
</dbReference>
<dbReference type="Gene3D" id="3.40.50.11270">
    <property type="match status" value="1"/>
</dbReference>
<dbReference type="Gene3D" id="3.40.1010.20">
    <property type="entry name" value="4-hydroxy-3-methylbut-2-enyl diphosphate reductase, catalytic domain"/>
    <property type="match status" value="2"/>
</dbReference>
<dbReference type="HAMAP" id="MF_00191">
    <property type="entry name" value="IspH"/>
    <property type="match status" value="1"/>
</dbReference>
<dbReference type="InterPro" id="IPR003451">
    <property type="entry name" value="LytB/IspH"/>
</dbReference>
<dbReference type="NCBIfam" id="TIGR00216">
    <property type="entry name" value="ispH_lytB"/>
    <property type="match status" value="1"/>
</dbReference>
<dbReference type="NCBIfam" id="NF002188">
    <property type="entry name" value="PRK01045.1-2"/>
    <property type="match status" value="1"/>
</dbReference>
<dbReference type="NCBIfam" id="NF002190">
    <property type="entry name" value="PRK01045.1-4"/>
    <property type="match status" value="1"/>
</dbReference>
<dbReference type="PANTHER" id="PTHR30426">
    <property type="entry name" value="4-HYDROXY-3-METHYLBUT-2-ENYL DIPHOSPHATE REDUCTASE"/>
    <property type="match status" value="1"/>
</dbReference>
<dbReference type="PANTHER" id="PTHR30426:SF0">
    <property type="entry name" value="4-HYDROXY-3-METHYLBUT-2-ENYL DIPHOSPHATE REDUCTASE"/>
    <property type="match status" value="1"/>
</dbReference>
<dbReference type="Pfam" id="PF02401">
    <property type="entry name" value="LYTB"/>
    <property type="match status" value="1"/>
</dbReference>
<evidence type="ECO:0000255" key="1">
    <source>
        <dbReference type="HAMAP-Rule" id="MF_00191"/>
    </source>
</evidence>